<evidence type="ECO:0000255" key="1">
    <source>
        <dbReference type="HAMAP-Rule" id="MF_00076"/>
    </source>
</evidence>
<protein>
    <recommendedName>
        <fullName evidence="1">Imidazoleglycerol-phosphate dehydratase</fullName>
        <shortName evidence="1">IGPD</shortName>
        <ecNumber evidence="1">4.2.1.19</ecNumber>
    </recommendedName>
</protein>
<feature type="chain" id="PRO_0000158180" description="Imidazoleglycerol-phosphate dehydratase">
    <location>
        <begin position="1"/>
        <end position="195"/>
    </location>
</feature>
<keyword id="KW-0028">Amino-acid biosynthesis</keyword>
<keyword id="KW-0963">Cytoplasm</keyword>
<keyword id="KW-0368">Histidine biosynthesis</keyword>
<keyword id="KW-0456">Lyase</keyword>
<keyword id="KW-1185">Reference proteome</keyword>
<name>HIS7_THEMA</name>
<organism>
    <name type="scientific">Thermotoga maritima (strain ATCC 43589 / DSM 3109 / JCM 10099 / NBRC 100826 / MSB8)</name>
    <dbReference type="NCBI Taxonomy" id="243274"/>
    <lineage>
        <taxon>Bacteria</taxon>
        <taxon>Thermotogati</taxon>
        <taxon>Thermotogota</taxon>
        <taxon>Thermotogae</taxon>
        <taxon>Thermotogales</taxon>
        <taxon>Thermotogaceae</taxon>
        <taxon>Thermotoga</taxon>
    </lineage>
</organism>
<dbReference type="EC" id="4.2.1.19" evidence="1"/>
<dbReference type="EMBL" id="AE000512">
    <property type="protein sequence ID" value="AAD36116.1"/>
    <property type="molecule type" value="Genomic_DNA"/>
</dbReference>
<dbReference type="PIR" id="F72304">
    <property type="entry name" value="F72304"/>
</dbReference>
<dbReference type="RefSeq" id="NP_228845.1">
    <property type="nucleotide sequence ID" value="NC_000853.1"/>
</dbReference>
<dbReference type="RefSeq" id="WP_004080483.1">
    <property type="nucleotide sequence ID" value="NZ_CP011107.1"/>
</dbReference>
<dbReference type="SMR" id="Q9X0C9"/>
<dbReference type="FunCoup" id="Q9X0C9">
    <property type="interactions" value="322"/>
</dbReference>
<dbReference type="STRING" id="243274.TM_1039"/>
<dbReference type="PaxDb" id="243274-THEMA_09165"/>
<dbReference type="EnsemblBacteria" id="AAD36116">
    <property type="protein sequence ID" value="AAD36116"/>
    <property type="gene ID" value="TM_1039"/>
</dbReference>
<dbReference type="KEGG" id="tma:TM1039"/>
<dbReference type="KEGG" id="tmi:THEMA_09165"/>
<dbReference type="KEGG" id="tmm:Tmari_1043"/>
<dbReference type="KEGG" id="tmw:THMA_1061"/>
<dbReference type="eggNOG" id="COG0131">
    <property type="taxonomic scope" value="Bacteria"/>
</dbReference>
<dbReference type="InParanoid" id="Q9X0C9"/>
<dbReference type="OrthoDB" id="9790411at2"/>
<dbReference type="UniPathway" id="UPA00031">
    <property type="reaction ID" value="UER00011"/>
</dbReference>
<dbReference type="Proteomes" id="UP000008183">
    <property type="component" value="Chromosome"/>
</dbReference>
<dbReference type="GO" id="GO:0005737">
    <property type="term" value="C:cytoplasm"/>
    <property type="evidence" value="ECO:0007669"/>
    <property type="project" value="UniProtKB-SubCell"/>
</dbReference>
<dbReference type="GO" id="GO:0004424">
    <property type="term" value="F:imidazoleglycerol-phosphate dehydratase activity"/>
    <property type="evidence" value="ECO:0000318"/>
    <property type="project" value="GO_Central"/>
</dbReference>
<dbReference type="GO" id="GO:0000105">
    <property type="term" value="P:L-histidine biosynthetic process"/>
    <property type="evidence" value="ECO:0000318"/>
    <property type="project" value="GO_Central"/>
</dbReference>
<dbReference type="FunFam" id="3.30.230.40:FF:000008">
    <property type="entry name" value="Imidazoleglycerol-phosphate dehydratase"/>
    <property type="match status" value="1"/>
</dbReference>
<dbReference type="Gene3D" id="3.30.230.40">
    <property type="entry name" value="Imidazole glycerol phosphate dehydratase, domain 1"/>
    <property type="match status" value="2"/>
</dbReference>
<dbReference type="HAMAP" id="MF_00076">
    <property type="entry name" value="HisB"/>
    <property type="match status" value="1"/>
</dbReference>
<dbReference type="InterPro" id="IPR038494">
    <property type="entry name" value="IGPD_sf"/>
</dbReference>
<dbReference type="InterPro" id="IPR000807">
    <property type="entry name" value="ImidazoleglycerolP_deHydtase"/>
</dbReference>
<dbReference type="InterPro" id="IPR020565">
    <property type="entry name" value="ImidazoleglycerP_deHydtase_CS"/>
</dbReference>
<dbReference type="InterPro" id="IPR020568">
    <property type="entry name" value="Ribosomal_Su5_D2-typ_SF"/>
</dbReference>
<dbReference type="PANTHER" id="PTHR23133:SF2">
    <property type="entry name" value="IMIDAZOLEGLYCEROL-PHOSPHATE DEHYDRATASE"/>
    <property type="match status" value="1"/>
</dbReference>
<dbReference type="PANTHER" id="PTHR23133">
    <property type="entry name" value="IMIDAZOLEGLYCEROL-PHOSPHATE DEHYDRATASE HIS7"/>
    <property type="match status" value="1"/>
</dbReference>
<dbReference type="Pfam" id="PF00475">
    <property type="entry name" value="IGPD"/>
    <property type="match status" value="1"/>
</dbReference>
<dbReference type="SUPFAM" id="SSF54211">
    <property type="entry name" value="Ribosomal protein S5 domain 2-like"/>
    <property type="match status" value="2"/>
</dbReference>
<dbReference type="PROSITE" id="PS00955">
    <property type="entry name" value="IGP_DEHYDRATASE_2"/>
    <property type="match status" value="1"/>
</dbReference>
<proteinExistence type="inferred from homology"/>
<comment type="catalytic activity">
    <reaction evidence="1">
        <text>D-erythro-1-(imidazol-4-yl)glycerol 3-phosphate = 3-(imidazol-4-yl)-2-oxopropyl phosphate + H2O</text>
        <dbReference type="Rhea" id="RHEA:11040"/>
        <dbReference type="ChEBI" id="CHEBI:15377"/>
        <dbReference type="ChEBI" id="CHEBI:57766"/>
        <dbReference type="ChEBI" id="CHEBI:58278"/>
        <dbReference type="EC" id="4.2.1.19"/>
    </reaction>
</comment>
<comment type="pathway">
    <text evidence="1">Amino-acid biosynthesis; L-histidine biosynthesis; L-histidine from 5-phospho-alpha-D-ribose 1-diphosphate: step 6/9.</text>
</comment>
<comment type="subcellular location">
    <subcellularLocation>
        <location evidence="1">Cytoplasm</location>
    </subcellularLocation>
</comment>
<comment type="similarity">
    <text evidence="1">Belongs to the imidazoleglycerol-phosphate dehydratase family.</text>
</comment>
<sequence length="195" mass="21997">MTVERLENGVIVQRNTNEIEISITLDTVHGKLEGSTGVNFFDHLLNTFCHYSGLGLRVSTCESKDGILHHLIEDFGISLGLAFRELFDYTKVRRFGEATVPMNEALVGCYVDLSGRPFFQKNFEFSVEKIEDMPVEGFEEFMCGFVNHARITVHFFKFFGKNDHHISESAMKSFGLAIAKALESSEKKTTKGVID</sequence>
<accession>Q9X0C9</accession>
<reference key="1">
    <citation type="journal article" date="1999" name="Nature">
        <title>Evidence for lateral gene transfer between Archaea and Bacteria from genome sequence of Thermotoga maritima.</title>
        <authorList>
            <person name="Nelson K.E."/>
            <person name="Clayton R.A."/>
            <person name="Gill S.R."/>
            <person name="Gwinn M.L."/>
            <person name="Dodson R.J."/>
            <person name="Haft D.H."/>
            <person name="Hickey E.K."/>
            <person name="Peterson J.D."/>
            <person name="Nelson W.C."/>
            <person name="Ketchum K.A."/>
            <person name="McDonald L.A."/>
            <person name="Utterback T.R."/>
            <person name="Malek J.A."/>
            <person name="Linher K.D."/>
            <person name="Garrett M.M."/>
            <person name="Stewart A.M."/>
            <person name="Cotton M.D."/>
            <person name="Pratt M.S."/>
            <person name="Phillips C.A."/>
            <person name="Richardson D.L."/>
            <person name="Heidelberg J.F."/>
            <person name="Sutton G.G."/>
            <person name="Fleischmann R.D."/>
            <person name="Eisen J.A."/>
            <person name="White O."/>
            <person name="Salzberg S.L."/>
            <person name="Smith H.O."/>
            <person name="Venter J.C."/>
            <person name="Fraser C.M."/>
        </authorList>
    </citation>
    <scope>NUCLEOTIDE SEQUENCE [LARGE SCALE GENOMIC DNA]</scope>
    <source>
        <strain>ATCC 43589 / DSM 3109 / JCM 10099 / NBRC 100826 / MSB8</strain>
    </source>
</reference>
<gene>
    <name evidence="1" type="primary">hisB</name>
    <name type="ordered locus">TM_1039</name>
</gene>